<protein>
    <recommendedName>
        <fullName>Acyl-homoserine-lactone synthase</fullName>
        <ecNumber>2.3.1.184</ecNumber>
    </recommendedName>
    <alternativeName>
        <fullName>Autoinducer synthesis protein TraI</fullName>
    </alternativeName>
</protein>
<comment type="function">
    <text>Required for the synthesis of OHHL (N-(3-oxohexanoyl)-L-homoserine lactone), an autoinducer molecule which binds to TraR and thus acts in the control of conjugal transfer.</text>
</comment>
<comment type="catalytic activity">
    <reaction>
        <text>a fatty acyl-[ACP] + S-adenosyl-L-methionine = an N-acyl-L-homoserine lactone + S-methyl-5'-thioadenosine + holo-[ACP] + H(+)</text>
        <dbReference type="Rhea" id="RHEA:10096"/>
        <dbReference type="Rhea" id="RHEA-COMP:9685"/>
        <dbReference type="Rhea" id="RHEA-COMP:14125"/>
        <dbReference type="ChEBI" id="CHEBI:15378"/>
        <dbReference type="ChEBI" id="CHEBI:17509"/>
        <dbReference type="ChEBI" id="CHEBI:55474"/>
        <dbReference type="ChEBI" id="CHEBI:59789"/>
        <dbReference type="ChEBI" id="CHEBI:64479"/>
        <dbReference type="ChEBI" id="CHEBI:138651"/>
        <dbReference type="EC" id="2.3.1.184"/>
    </reaction>
</comment>
<comment type="similarity">
    <text evidence="1">Belongs to the autoinducer synthase family.</text>
</comment>
<proteinExistence type="inferred from homology"/>
<feature type="chain" id="PRO_0000210899" description="Acyl-homoserine-lactone synthase">
    <location>
        <begin position="1"/>
        <end position="212"/>
    </location>
</feature>
<geneLocation type="plasmid">
    <name>pTiA6NC</name>
</geneLocation>
<reference key="1">
    <citation type="journal article" date="1994" name="J. Bacteriol.">
        <title>A LuxR-LuxI type regulatory system activates Agrobacterium Ti plasmid conjugal transfer in the presence of a plant tumor metabolite.</title>
        <authorList>
            <person name="Fuqua W.C. Jr."/>
            <person name="Winans S.C."/>
        </authorList>
    </citation>
    <scope>NUCLEOTIDE SEQUENCE [GENOMIC DNA]</scope>
    <source>
        <strain>A348</strain>
    </source>
</reference>
<organism>
    <name type="scientific">Rhizobium radiobacter</name>
    <name type="common">Agrobacterium tumefaciens</name>
    <name type="synonym">Agrobacterium radiobacter</name>
    <dbReference type="NCBI Taxonomy" id="358"/>
    <lineage>
        <taxon>Bacteria</taxon>
        <taxon>Pseudomonadati</taxon>
        <taxon>Pseudomonadota</taxon>
        <taxon>Alphaproteobacteria</taxon>
        <taxon>Hyphomicrobiales</taxon>
        <taxon>Rhizobiaceae</taxon>
        <taxon>Rhizobium/Agrobacterium group</taxon>
        <taxon>Agrobacterium</taxon>
        <taxon>Agrobacterium tumefaciens complex</taxon>
    </lineage>
</organism>
<sequence>MLILTVSPDQYQHQNSYLKQMHRLRAEVFGNRLKWDVAIEDGGERDQYDELSPTYILATFGGQRVVGCARLLAPSGPTMLERTFPQLLATGSLSATTAMIETSRFCVDTTLPTGRAGRQLHLATLTMFAGIIEWSMANGYDEIVTATDLRFERILKRAGWPMTRLGEPVAIGNTVAVAGHLPADRKSFERVCPPGYRSIIADDNGRPLRSAA</sequence>
<evidence type="ECO:0000255" key="1">
    <source>
        <dbReference type="PROSITE-ProRule" id="PRU00533"/>
    </source>
</evidence>
<gene>
    <name type="primary">traI</name>
</gene>
<dbReference type="EC" id="2.3.1.184"/>
<dbReference type="EMBL" id="L17024">
    <property type="protein sequence ID" value="AAA64792.1"/>
    <property type="molecule type" value="Genomic_DNA"/>
</dbReference>
<dbReference type="EMBL" id="AF242881">
    <property type="protein sequence ID" value="AAB95104.1"/>
    <property type="molecule type" value="Genomic_DNA"/>
</dbReference>
<dbReference type="RefSeq" id="NP_059761.1">
    <property type="nucleotide sequence ID" value="NC_002377.1"/>
</dbReference>
<dbReference type="RefSeq" id="WP_010892449.1">
    <property type="nucleotide sequence ID" value="NC_002377.1"/>
</dbReference>
<dbReference type="SMR" id="P33904"/>
<dbReference type="GO" id="GO:0061579">
    <property type="term" value="F:N-acyl homoserine lactone synthase activity"/>
    <property type="evidence" value="ECO:0007669"/>
    <property type="project" value="UniProtKB-EC"/>
</dbReference>
<dbReference type="GO" id="GO:0009372">
    <property type="term" value="P:quorum sensing"/>
    <property type="evidence" value="ECO:0007669"/>
    <property type="project" value="UniProtKB-KW"/>
</dbReference>
<dbReference type="GO" id="GO:0007165">
    <property type="term" value="P:signal transduction"/>
    <property type="evidence" value="ECO:0007669"/>
    <property type="project" value="TreeGrafter"/>
</dbReference>
<dbReference type="Gene3D" id="3.40.630.30">
    <property type="match status" value="1"/>
</dbReference>
<dbReference type="InterPro" id="IPR016181">
    <property type="entry name" value="Acyl_CoA_acyltransferase"/>
</dbReference>
<dbReference type="InterPro" id="IPR018311">
    <property type="entry name" value="Autoind_synth_CS"/>
</dbReference>
<dbReference type="InterPro" id="IPR001690">
    <property type="entry name" value="Autoind_synthase"/>
</dbReference>
<dbReference type="NCBIfam" id="NF010408">
    <property type="entry name" value="PRK13834.1"/>
    <property type="match status" value="1"/>
</dbReference>
<dbReference type="PANTHER" id="PTHR39322">
    <property type="entry name" value="ACYL-HOMOSERINE-LACTONE SYNTHASE"/>
    <property type="match status" value="1"/>
</dbReference>
<dbReference type="PANTHER" id="PTHR39322:SF1">
    <property type="entry name" value="ISOVALERYL-HOMOSERINE LACTONE SYNTHASE"/>
    <property type="match status" value="1"/>
</dbReference>
<dbReference type="Pfam" id="PF00765">
    <property type="entry name" value="Autoind_synth"/>
    <property type="match status" value="1"/>
</dbReference>
<dbReference type="PRINTS" id="PR01549">
    <property type="entry name" value="AUTOINDCRSYN"/>
</dbReference>
<dbReference type="SUPFAM" id="SSF55729">
    <property type="entry name" value="Acyl-CoA N-acyltransferases (Nat)"/>
    <property type="match status" value="1"/>
</dbReference>
<dbReference type="PROSITE" id="PS00949">
    <property type="entry name" value="AUTOINDUCER_SYNTH_1"/>
    <property type="match status" value="1"/>
</dbReference>
<dbReference type="PROSITE" id="PS51187">
    <property type="entry name" value="AUTOINDUCER_SYNTH_2"/>
    <property type="match status" value="1"/>
</dbReference>
<name>TRAI_RHIRD</name>
<accession>P33904</accession>
<keyword id="KW-0071">Autoinducer synthesis</keyword>
<keyword id="KW-0184">Conjugation</keyword>
<keyword id="KW-0614">Plasmid</keyword>
<keyword id="KW-0673">Quorum sensing</keyword>
<keyword id="KW-0949">S-adenosyl-L-methionine</keyword>
<keyword id="KW-0808">Transferase</keyword>